<keyword id="KW-0049">Antioxidant</keyword>
<keyword id="KW-0186">Copper</keyword>
<keyword id="KW-0963">Cytoplasm</keyword>
<keyword id="KW-0479">Metal-binding</keyword>
<keyword id="KW-0560">Oxidoreductase</keyword>
<keyword id="KW-0862">Zinc</keyword>
<organism>
    <name type="scientific">Drosophila tolteca</name>
    <name type="common">Fruit fly</name>
    <dbReference type="NCBI Taxonomy" id="7259"/>
    <lineage>
        <taxon>Eukaryota</taxon>
        <taxon>Metazoa</taxon>
        <taxon>Ecdysozoa</taxon>
        <taxon>Arthropoda</taxon>
        <taxon>Hexapoda</taxon>
        <taxon>Insecta</taxon>
        <taxon>Pterygota</taxon>
        <taxon>Neoptera</taxon>
        <taxon>Endopterygota</taxon>
        <taxon>Diptera</taxon>
        <taxon>Brachycera</taxon>
        <taxon>Muscomorpha</taxon>
        <taxon>Ephydroidea</taxon>
        <taxon>Drosophilidae</taxon>
        <taxon>Drosophila</taxon>
        <taxon>Sophophora</taxon>
    </lineage>
</organism>
<feature type="chain" id="PRO_0000164097" description="Superoxide dismutase [Cu-Zn]">
    <location>
        <begin position="1" status="less than"/>
        <end position="114" status="greater than"/>
    </location>
</feature>
<feature type="region of interest" description="Disordered" evidence="3">
    <location>
        <begin position="54"/>
        <end position="80"/>
    </location>
</feature>
<feature type="compositionally biased region" description="Basic and acidic residues" evidence="3">
    <location>
        <begin position="59"/>
        <end position="73"/>
    </location>
</feature>
<feature type="binding site" evidence="1">
    <location>
        <position position="37"/>
    </location>
    <ligand>
        <name>Cu cation</name>
        <dbReference type="ChEBI" id="CHEBI:23378"/>
        <note>catalytic</note>
    </ligand>
</feature>
<feature type="binding site" evidence="1">
    <location>
        <position position="39"/>
    </location>
    <ligand>
        <name>Cu cation</name>
        <dbReference type="ChEBI" id="CHEBI:23378"/>
        <note>catalytic</note>
    </ligand>
</feature>
<feature type="binding site" evidence="1">
    <location>
        <position position="54"/>
    </location>
    <ligand>
        <name>Cu cation</name>
        <dbReference type="ChEBI" id="CHEBI:23378"/>
        <note>catalytic</note>
    </ligand>
</feature>
<feature type="binding site" evidence="1">
    <location>
        <position position="54"/>
    </location>
    <ligand>
        <name>Zn(2+)</name>
        <dbReference type="ChEBI" id="CHEBI:29105"/>
        <note>structural</note>
    </ligand>
</feature>
<feature type="binding site" evidence="1">
    <location>
        <position position="62"/>
    </location>
    <ligand>
        <name>Zn(2+)</name>
        <dbReference type="ChEBI" id="CHEBI:29105"/>
        <note>structural</note>
    </ligand>
</feature>
<feature type="binding site" evidence="1">
    <location>
        <position position="71"/>
    </location>
    <ligand>
        <name>Zn(2+)</name>
        <dbReference type="ChEBI" id="CHEBI:29105"/>
        <note>structural</note>
    </ligand>
</feature>
<feature type="binding site" evidence="1">
    <location>
        <position position="74"/>
    </location>
    <ligand>
        <name>Zn(2+)</name>
        <dbReference type="ChEBI" id="CHEBI:29105"/>
        <note>structural</note>
    </ligand>
</feature>
<feature type="binding site" evidence="1">
    <location>
        <position position="111"/>
    </location>
    <ligand>
        <name>Cu cation</name>
        <dbReference type="ChEBI" id="CHEBI:23378"/>
        <note>catalytic</note>
    </ligand>
</feature>
<feature type="non-terminal residue">
    <location>
        <position position="1"/>
    </location>
</feature>
<feature type="non-terminal residue">
    <location>
        <position position="114"/>
    </location>
</feature>
<dbReference type="EC" id="1.15.1.1"/>
<dbReference type="EMBL" id="U47867">
    <property type="protein sequence ID" value="AAB50312.1"/>
    <property type="molecule type" value="Genomic_DNA"/>
</dbReference>
<dbReference type="SMR" id="Q95095"/>
<dbReference type="GO" id="GO:0005737">
    <property type="term" value="C:cytoplasm"/>
    <property type="evidence" value="ECO:0007669"/>
    <property type="project" value="UniProtKB-SubCell"/>
</dbReference>
<dbReference type="GO" id="GO:0005507">
    <property type="term" value="F:copper ion binding"/>
    <property type="evidence" value="ECO:0007669"/>
    <property type="project" value="InterPro"/>
</dbReference>
<dbReference type="GO" id="GO:0004784">
    <property type="term" value="F:superoxide dismutase activity"/>
    <property type="evidence" value="ECO:0007669"/>
    <property type="project" value="UniProtKB-EC"/>
</dbReference>
<dbReference type="CDD" id="cd00305">
    <property type="entry name" value="Cu-Zn_Superoxide_Dismutase"/>
    <property type="match status" value="1"/>
</dbReference>
<dbReference type="Gene3D" id="2.60.40.200">
    <property type="entry name" value="Superoxide dismutase, copper/zinc binding domain"/>
    <property type="match status" value="1"/>
</dbReference>
<dbReference type="InterPro" id="IPR036423">
    <property type="entry name" value="SOD-like_Cu/Zn_dom_sf"/>
</dbReference>
<dbReference type="InterPro" id="IPR024134">
    <property type="entry name" value="SOD_Cu/Zn_/chaperone"/>
</dbReference>
<dbReference type="InterPro" id="IPR001424">
    <property type="entry name" value="SOD_Cu_Zn_dom"/>
</dbReference>
<dbReference type="PANTHER" id="PTHR10003">
    <property type="entry name" value="SUPEROXIDE DISMUTASE CU-ZN -RELATED"/>
    <property type="match status" value="1"/>
</dbReference>
<dbReference type="Pfam" id="PF00080">
    <property type="entry name" value="Sod_Cu"/>
    <property type="match status" value="1"/>
</dbReference>
<dbReference type="PRINTS" id="PR00068">
    <property type="entry name" value="CUZNDISMTASE"/>
</dbReference>
<dbReference type="SUPFAM" id="SSF49329">
    <property type="entry name" value="Cu,Zn superoxide dismutase-like"/>
    <property type="match status" value="1"/>
</dbReference>
<reference key="1">
    <citation type="journal article" date="1997" name="Mol. Phylogenet. Evol.">
        <title>Evolution of the Drosophila obscura species group inferred from the Gpdh and Sod genes.</title>
        <authorList>
            <person name="Barrio E."/>
            <person name="Ayala F.J."/>
        </authorList>
    </citation>
    <scope>NUCLEOTIDE SEQUENCE [GENOMIC DNA]</scope>
    <source>
        <strain>NDSSC 14012-0201.0</strain>
    </source>
</reference>
<comment type="function">
    <text>Destroys radicals which are normally produced within the cells and which are toxic to biological systems.</text>
</comment>
<comment type="catalytic activity">
    <reaction>
        <text>2 superoxide + 2 H(+) = H2O2 + O2</text>
        <dbReference type="Rhea" id="RHEA:20696"/>
        <dbReference type="ChEBI" id="CHEBI:15378"/>
        <dbReference type="ChEBI" id="CHEBI:15379"/>
        <dbReference type="ChEBI" id="CHEBI:16240"/>
        <dbReference type="ChEBI" id="CHEBI:18421"/>
        <dbReference type="EC" id="1.15.1.1"/>
    </reaction>
</comment>
<comment type="cofactor">
    <cofactor evidence="1">
        <name>Cu cation</name>
        <dbReference type="ChEBI" id="CHEBI:23378"/>
    </cofactor>
    <text evidence="1">Binds 1 copper ion per subunit.</text>
</comment>
<comment type="cofactor">
    <cofactor evidence="1">
        <name>Zn(2+)</name>
        <dbReference type="ChEBI" id="CHEBI:29105"/>
    </cofactor>
    <text evidence="1">Binds 1 zinc ion per subunit.</text>
</comment>
<comment type="subunit">
    <text evidence="1">Homodimer.</text>
</comment>
<comment type="subcellular location">
    <subcellularLocation>
        <location>Cytoplasm</location>
    </subcellularLocation>
</comment>
<comment type="similarity">
    <text evidence="4">Belongs to the Cu-Zn superoxide dismutase family.</text>
</comment>
<accession>Q95095</accession>
<protein>
    <recommendedName>
        <fullName evidence="2">Superoxide dismutase [Cu-Zn]</fullName>
        <ecNumber>1.15.1.1</ecNumber>
    </recommendedName>
    <alternativeName>
        <fullName evidence="2">Superoxide dismutase 1</fullName>
    </alternativeName>
</protein>
<gene>
    <name evidence="2" type="primary">Sod1</name>
    <name evidence="2" type="synonym">Sod</name>
</gene>
<sequence length="114" mass="11763">INGDAKGTVFFEQETSEAPVKVTGEVLGLTKGLHGFHVHEFGNNTNGCMSSGPHFNPGNKEHGAPTDGNRHLGDLGNIQAAGDSPTAVSITDSKITLFGANSIIGRTVVVHADA</sequence>
<name>SODC_DROTO</name>
<evidence type="ECO:0000250" key="1"/>
<evidence type="ECO:0000250" key="2">
    <source>
        <dbReference type="UniProtKB" id="P61851"/>
    </source>
</evidence>
<evidence type="ECO:0000256" key="3">
    <source>
        <dbReference type="SAM" id="MobiDB-lite"/>
    </source>
</evidence>
<evidence type="ECO:0000305" key="4"/>
<proteinExistence type="inferred from homology"/>